<protein>
    <recommendedName>
        <fullName evidence="7">Purine-uracil permease NCS1</fullName>
    </recommendedName>
    <alternativeName>
        <fullName evidence="6">Nucleobase cation symporter 1</fullName>
        <shortName evidence="6">AtNCS1</shortName>
    </alternativeName>
    <alternativeName>
        <fullName evidence="5">Plastidic nucleobase transporter</fullName>
    </alternativeName>
    <alternativeName>
        <fullName evidence="7">Uracil/purine transport protein NCS1</fullName>
    </alternativeName>
</protein>
<gene>
    <name evidence="6" type="primary">NCS1</name>
    <name evidence="5" type="synonym">PLUTO</name>
    <name evidence="8" type="ordered locus">At5g03555</name>
    <name evidence="9" type="ORF">F12E4.350</name>
</gene>
<feature type="chain" id="PRO_0000433155" description="Purine-uracil permease NCS1">
    <location>
        <begin position="1"/>
        <end position="599"/>
    </location>
</feature>
<feature type="transmembrane region" description="Helical" evidence="1">
    <location>
        <begin position="140"/>
        <end position="160"/>
    </location>
</feature>
<feature type="transmembrane region" description="Helical" evidence="1">
    <location>
        <begin position="164"/>
        <end position="184"/>
    </location>
</feature>
<feature type="transmembrane region" description="Helical" evidence="1">
    <location>
        <begin position="218"/>
        <end position="238"/>
    </location>
</feature>
<feature type="transmembrane region" description="Helical" evidence="1">
    <location>
        <begin position="257"/>
        <end position="277"/>
    </location>
</feature>
<feature type="transmembrane region" description="Helical" evidence="1">
    <location>
        <begin position="293"/>
        <end position="313"/>
    </location>
</feature>
<feature type="transmembrane region" description="Helical" evidence="1">
    <location>
        <begin position="327"/>
        <end position="347"/>
    </location>
</feature>
<feature type="transmembrane region" description="Helical" evidence="1">
    <location>
        <begin position="363"/>
        <end position="383"/>
    </location>
</feature>
<feature type="transmembrane region" description="Helical" evidence="1">
    <location>
        <begin position="411"/>
        <end position="433"/>
    </location>
</feature>
<feature type="transmembrane region" description="Helical" evidence="1">
    <location>
        <begin position="445"/>
        <end position="465"/>
    </location>
</feature>
<feature type="transmembrane region" description="Helical" evidence="1">
    <location>
        <begin position="474"/>
        <end position="494"/>
    </location>
</feature>
<feature type="transmembrane region" description="Helical" evidence="1">
    <location>
        <begin position="525"/>
        <end position="545"/>
    </location>
</feature>
<feature type="transmembrane region" description="Helical" evidence="1">
    <location>
        <begin position="560"/>
        <end position="580"/>
    </location>
</feature>
<feature type="mutagenesis site" description="Slightly affects uracil, guanine and adenine transport activity." evidence="4">
    <original>L</original>
    <variation>A</variation>
    <location>
        <position position="144"/>
    </location>
</feature>
<feature type="mutagenesis site" description="Reduces guanine and adenine transport activity 2-fold." evidence="4">
    <original>V</original>
    <variation>A</variation>
    <location>
        <position position="145"/>
    </location>
</feature>
<feature type="mutagenesis site" description="Slightly affects uracil, guanine and adenine transport activity." evidence="4">
    <original>G</original>
    <variation>K</variation>
    <location>
        <position position="147"/>
    </location>
</feature>
<feature type="mutagenesis site" description="Reduces uracil, guanine and adenine transport activity 2-fold." evidence="4">
    <original>G</original>
    <variation>Q</variation>
    <location>
        <position position="147"/>
    </location>
</feature>
<feature type="mutagenesis site" description="Reduces uracil, guanine and adenine transport activity 2-fold." evidence="4">
    <original>W</original>
    <variation>A</variation>
    <location>
        <position position="223"/>
    </location>
</feature>
<feature type="mutagenesis site" description="Reduces uracil and guanine transport activity 2-fold." evidence="4">
    <original>I</original>
    <variation>A</variation>
    <location>
        <position position="226"/>
    </location>
</feature>
<feature type="mutagenesis site" description="Reduces uracil and guanine transport activity 10-fold. Reduces adenine transport activity 5-fold." evidence="4">
    <original>E</original>
    <variation>A</variation>
    <location>
        <position position="227"/>
    </location>
</feature>
<feature type="mutagenesis site" description="Reduces uracil transport activity 10-fold. Reduces guanine transport activity 5-fold. Reduces adenine transport activity 2-fold." evidence="4">
    <original>E</original>
    <variation>D</variation>
    <location>
        <position position="227"/>
    </location>
</feature>
<feature type="mutagenesis site" description="Reduces uracil, guanine and adenine transport activity 10-fold." evidence="4">
    <original>E</original>
    <variation>K</variation>
    <location>
        <position position="227"/>
    </location>
</feature>
<feature type="mutagenesis site" description="Reduces uracil transport activity 10-fold. Reduces adenine transport activity 5-fold." evidence="4">
    <original>E</original>
    <variation>Q</variation>
    <location>
        <position position="227"/>
    </location>
</feature>
<feature type="mutagenesis site" description="Reduces adenine transport activity 2-fold." evidence="4">
    <original>F</original>
    <variation>A</variation>
    <location>
        <position position="341"/>
    </location>
</feature>
<feature type="mutagenesis site" description="Reduces adenine transport activity 5-fold." evidence="4">
    <original>W</original>
    <variation>A</variation>
    <location>
        <position position="342"/>
    </location>
</feature>
<feature type="mutagenesis site" description="Slightly affects uracil, guanine and adenine transport activity." evidence="4">
    <original>T</original>
    <variation>A</variation>
    <location>
        <position position="425"/>
    </location>
</feature>
<feature type="mutagenesis site" description="Reduces uracil, guanine and adenine transport activity 2-fold." evidence="4">
    <original>N</original>
    <variation>A</variation>
    <location>
        <position position="426"/>
    </location>
</feature>
<feature type="mutagenesis site" description="Reduces uracil, guanine and adenine transport activity 2-fold." evidence="4">
    <original>N</original>
    <variation>A</variation>
    <location>
        <position position="430"/>
    </location>
</feature>
<sequence length="599" mass="65356">MVSNCLSLSLHLNLHPHKHNRHSLSSLRSRTKAKLYQHVSFTDSSHKSSYTSCVSTFDIQRKSSKHYELGKHSFSPILPGDNLVLSRSGVIRPRLSAMTGSEINDHGYDESQFDPSLTNDDLKPTTPSQRTFSWLDMSSLWIGLVVGVPTYYLAGSLVDLGMAWWQGIATVVTANLILLVPLVLTAQPGTLYGISFPVLARSSFGIRGAHIPTLLRALVGCGWYGIETWIGGEAIFLLLPGHIKKSALSHTLPWLGTSPLEFSCFIVFWLAQLCIVWRGMDGIRKLEKYSAPILISLTSCLLAWSYLKAGGFGHMLSLSSKLTSAQFWTLFFPSLTANISFWATLALNIPDFSRFAKSQTDQIIGQVGLPVFMGLFTFVGVAVTSSTSIIFGRVISNPIELLGQIGGLATTLLAIVGISLATLTTNIAANVVAPANALVNLNPKFFTFGRGAFLTAVLGIVFQPWRLLKSSESFVYTWLIGYSALLGPIGGIILVDYYLIKKMKLNIGDLYSLSPSGEYYFSKGYNVAAVVALVAGIIPVVPGFLHKISALSKISNGFVVVYDNALFFSFIIAGFVYWIIMSRLGRKQSSLSSSSHPLL</sequence>
<keyword id="KW-0150">Chloroplast</keyword>
<keyword id="KW-0472">Membrane</keyword>
<keyword id="KW-0934">Plastid</keyword>
<keyword id="KW-1185">Reference proteome</keyword>
<keyword id="KW-0812">Transmembrane</keyword>
<keyword id="KW-1133">Transmembrane helix</keyword>
<keyword id="KW-0813">Transport</keyword>
<dbReference type="EMBL" id="AL162751">
    <property type="protein sequence ID" value="CAB83318.1"/>
    <property type="molecule type" value="Genomic_DNA"/>
</dbReference>
<dbReference type="EMBL" id="CP002688">
    <property type="protein sequence ID" value="AED90625.1"/>
    <property type="molecule type" value="Genomic_DNA"/>
</dbReference>
<dbReference type="EMBL" id="AY058195">
    <property type="protein sequence ID" value="AAL25608.1"/>
    <property type="status" value="ALT_INIT"/>
    <property type="molecule type" value="mRNA"/>
</dbReference>
<dbReference type="EMBL" id="AY088516">
    <property type="protein sequence ID" value="AAM67341.1"/>
    <property type="status" value="ALT_INIT"/>
    <property type="molecule type" value="mRNA"/>
</dbReference>
<dbReference type="PIR" id="T48383">
    <property type="entry name" value="T48383"/>
</dbReference>
<dbReference type="RefSeq" id="NP_568122.2">
    <property type="nucleotide sequence ID" value="NM_120436.4"/>
</dbReference>
<dbReference type="SMR" id="Q9LZD0"/>
<dbReference type="FunCoup" id="Q9LZD0">
    <property type="interactions" value="87"/>
</dbReference>
<dbReference type="STRING" id="3702.Q9LZD0"/>
<dbReference type="TCDB" id="2.A.39.3.11">
    <property type="family name" value="the nucleobase:cation symporter-1 (ncs1) family"/>
</dbReference>
<dbReference type="PaxDb" id="3702-AT5G03555.1"/>
<dbReference type="ProteomicsDB" id="250998"/>
<dbReference type="EnsemblPlants" id="AT5G03555.1">
    <property type="protein sequence ID" value="AT5G03555.1"/>
    <property type="gene ID" value="AT5G03555"/>
</dbReference>
<dbReference type="GeneID" id="831791"/>
<dbReference type="Gramene" id="AT5G03555.1">
    <property type="protein sequence ID" value="AT5G03555.1"/>
    <property type="gene ID" value="AT5G03555"/>
</dbReference>
<dbReference type="KEGG" id="ath:AT5G03555"/>
<dbReference type="Araport" id="AT5G03555"/>
<dbReference type="TAIR" id="AT5G03555">
    <property type="gene designation" value="NCS1"/>
</dbReference>
<dbReference type="eggNOG" id="KOG0568">
    <property type="taxonomic scope" value="Eukaryota"/>
</dbReference>
<dbReference type="eggNOG" id="KOG2466">
    <property type="taxonomic scope" value="Eukaryota"/>
</dbReference>
<dbReference type="HOGENOM" id="CLU_021555_0_1_1"/>
<dbReference type="InParanoid" id="Q9LZD0"/>
<dbReference type="OMA" id="WRTGGMI"/>
<dbReference type="PhylomeDB" id="Q9LZD0"/>
<dbReference type="PRO" id="PR:Q9LZD0"/>
<dbReference type="Proteomes" id="UP000006548">
    <property type="component" value="Chromosome 5"/>
</dbReference>
<dbReference type="ExpressionAtlas" id="Q9LZD0">
    <property type="expression patterns" value="baseline and differential"/>
</dbReference>
<dbReference type="GO" id="GO:0031969">
    <property type="term" value="C:chloroplast membrane"/>
    <property type="evidence" value="ECO:0007669"/>
    <property type="project" value="UniProtKB-SubCell"/>
</dbReference>
<dbReference type="GO" id="GO:0009526">
    <property type="term" value="C:plastid envelope"/>
    <property type="evidence" value="ECO:0000314"/>
    <property type="project" value="TAIR"/>
</dbReference>
<dbReference type="GO" id="GO:0015205">
    <property type="term" value="F:nucleobase transmembrane transporter activity"/>
    <property type="evidence" value="ECO:0000314"/>
    <property type="project" value="TAIR"/>
</dbReference>
<dbReference type="GO" id="GO:0043100">
    <property type="term" value="P:pyrimidine nucleobase salvage"/>
    <property type="evidence" value="ECO:0000315"/>
    <property type="project" value="TAIR"/>
</dbReference>
<dbReference type="CDD" id="cd11485">
    <property type="entry name" value="SLC-NCS1sbd_YbbW-like"/>
    <property type="match status" value="1"/>
</dbReference>
<dbReference type="FunFam" id="1.10.4160.10:FF:000001">
    <property type="entry name" value="Uracil permease, putative"/>
    <property type="match status" value="1"/>
</dbReference>
<dbReference type="Gene3D" id="1.10.4160.10">
    <property type="entry name" value="Hydantoin permease"/>
    <property type="match status" value="1"/>
</dbReference>
<dbReference type="InterPro" id="IPR001248">
    <property type="entry name" value="Pur-cyt_permease"/>
</dbReference>
<dbReference type="InterPro" id="IPR045225">
    <property type="entry name" value="Uracil/uridine/allantoin_perm"/>
</dbReference>
<dbReference type="PANTHER" id="PTHR30618">
    <property type="entry name" value="NCS1 FAMILY PURINE/PYRIMIDINE TRANSPORTER"/>
    <property type="match status" value="1"/>
</dbReference>
<dbReference type="PANTHER" id="PTHR30618:SF0">
    <property type="entry name" value="PURINE-URACIL PERMEASE NCS1"/>
    <property type="match status" value="1"/>
</dbReference>
<dbReference type="Pfam" id="PF02133">
    <property type="entry name" value="Transp_cyt_pur"/>
    <property type="match status" value="1"/>
</dbReference>
<comment type="function">
    <text evidence="2 3 4">Nucleobase-proton symporter that facilitates the uptake of nucleobases in the cells. Can transport adenine, guanine and uracil (PubMed:22474184, PubMed:22616996, PubMed:24621654). Contributes to uracil import into plastids for plastidic uracil salvage which is essential for plant growth and development (PubMed:22474184).</text>
</comment>
<comment type="biophysicochemical properties">
    <kinetics>
        <KM evidence="3">7 uM for uracil</KM>
        <KM evidence="2">16.4 uM for uracil</KM>
        <KM evidence="3">7.9 uM for adenine</KM>
        <KM evidence="2">0.4 uM for adenine</KM>
        <KM evidence="2">6.3 uM for guanine</KM>
    </kinetics>
</comment>
<comment type="subcellular location">
    <subcellularLocation>
        <location evidence="2">Plastid</location>
        <location evidence="2">Chloroplast envelope</location>
    </subcellularLocation>
    <subcellularLocation>
        <location evidence="2">Plastid</location>
        <location evidence="2">Chloroplast membrane</location>
        <topology evidence="1">Multi-pass membrane protein</topology>
    </subcellularLocation>
</comment>
<comment type="tissue specificity">
    <text evidence="2">Expressed in roots, leaves, stems, flowers, siliques and seeds.</text>
</comment>
<comment type="disruption phenotype">
    <text evidence="3">No visible phenotype under normal growth conditions.</text>
</comment>
<comment type="similarity">
    <text evidence="7">Belongs to the purine-cytosine permease (2.A.39) family.</text>
</comment>
<comment type="sequence caution" evidence="7">
    <conflict type="erroneous initiation">
        <sequence resource="EMBL-CDS" id="AAL25608"/>
    </conflict>
    <text>Truncated N-terminus.</text>
</comment>
<comment type="sequence caution" evidence="7">
    <conflict type="erroneous initiation">
        <sequence resource="EMBL-CDS" id="AAM67341"/>
    </conflict>
    <text>Truncated N-terminus.</text>
</comment>
<accession>Q9LZD0</accession>
<accession>Q93Z26</accession>
<proteinExistence type="evidence at protein level"/>
<name>NCS1_ARATH</name>
<evidence type="ECO:0000255" key="1"/>
<evidence type="ECO:0000269" key="2">
    <source>
    </source>
</evidence>
<evidence type="ECO:0000269" key="3">
    <source>
    </source>
</evidence>
<evidence type="ECO:0000269" key="4">
    <source>
    </source>
</evidence>
<evidence type="ECO:0000303" key="5">
    <source>
    </source>
</evidence>
<evidence type="ECO:0000303" key="6">
    <source>
    </source>
</evidence>
<evidence type="ECO:0000305" key="7"/>
<evidence type="ECO:0000312" key="8">
    <source>
        <dbReference type="Araport" id="AT5G03555"/>
    </source>
</evidence>
<evidence type="ECO:0000312" key="9">
    <source>
        <dbReference type="EMBL" id="CAB83318.1"/>
    </source>
</evidence>
<reference key="1">
    <citation type="journal article" date="2000" name="Nature">
        <title>Sequence and analysis of chromosome 5 of the plant Arabidopsis thaliana.</title>
        <authorList>
            <person name="Tabata S."/>
            <person name="Kaneko T."/>
            <person name="Nakamura Y."/>
            <person name="Kotani H."/>
            <person name="Kato T."/>
            <person name="Asamizu E."/>
            <person name="Miyajima N."/>
            <person name="Sasamoto S."/>
            <person name="Kimura T."/>
            <person name="Hosouchi T."/>
            <person name="Kawashima K."/>
            <person name="Kohara M."/>
            <person name="Matsumoto M."/>
            <person name="Matsuno A."/>
            <person name="Muraki A."/>
            <person name="Nakayama S."/>
            <person name="Nakazaki N."/>
            <person name="Naruo K."/>
            <person name="Okumura S."/>
            <person name="Shinpo S."/>
            <person name="Takeuchi C."/>
            <person name="Wada T."/>
            <person name="Watanabe A."/>
            <person name="Yamada M."/>
            <person name="Yasuda M."/>
            <person name="Sato S."/>
            <person name="de la Bastide M."/>
            <person name="Huang E."/>
            <person name="Spiegel L."/>
            <person name="Gnoj L."/>
            <person name="O'Shaughnessy A."/>
            <person name="Preston R."/>
            <person name="Habermann K."/>
            <person name="Murray J."/>
            <person name="Johnson D."/>
            <person name="Rohlfing T."/>
            <person name="Nelson J."/>
            <person name="Stoneking T."/>
            <person name="Pepin K."/>
            <person name="Spieth J."/>
            <person name="Sekhon M."/>
            <person name="Armstrong J."/>
            <person name="Becker M."/>
            <person name="Belter E."/>
            <person name="Cordum H."/>
            <person name="Cordes M."/>
            <person name="Courtney L."/>
            <person name="Courtney W."/>
            <person name="Dante M."/>
            <person name="Du H."/>
            <person name="Edwards J."/>
            <person name="Fryman J."/>
            <person name="Haakensen B."/>
            <person name="Lamar E."/>
            <person name="Latreille P."/>
            <person name="Leonard S."/>
            <person name="Meyer R."/>
            <person name="Mulvaney E."/>
            <person name="Ozersky P."/>
            <person name="Riley A."/>
            <person name="Strowmatt C."/>
            <person name="Wagner-McPherson C."/>
            <person name="Wollam A."/>
            <person name="Yoakum M."/>
            <person name="Bell M."/>
            <person name="Dedhia N."/>
            <person name="Parnell L."/>
            <person name="Shah R."/>
            <person name="Rodriguez M."/>
            <person name="Hoon See L."/>
            <person name="Vil D."/>
            <person name="Baker J."/>
            <person name="Kirchoff K."/>
            <person name="Toth K."/>
            <person name="King L."/>
            <person name="Bahret A."/>
            <person name="Miller B."/>
            <person name="Marra M.A."/>
            <person name="Martienssen R."/>
            <person name="McCombie W.R."/>
            <person name="Wilson R.K."/>
            <person name="Murphy G."/>
            <person name="Bancroft I."/>
            <person name="Volckaert G."/>
            <person name="Wambutt R."/>
            <person name="Duesterhoeft A."/>
            <person name="Stiekema W."/>
            <person name="Pohl T."/>
            <person name="Entian K.-D."/>
            <person name="Terryn N."/>
            <person name="Hartley N."/>
            <person name="Bent E."/>
            <person name="Johnson S."/>
            <person name="Langham S.-A."/>
            <person name="McCullagh B."/>
            <person name="Robben J."/>
            <person name="Grymonprez B."/>
            <person name="Zimmermann W."/>
            <person name="Ramsperger U."/>
            <person name="Wedler H."/>
            <person name="Balke K."/>
            <person name="Wedler E."/>
            <person name="Peters S."/>
            <person name="van Staveren M."/>
            <person name="Dirkse W."/>
            <person name="Mooijman P."/>
            <person name="Klein Lankhorst R."/>
            <person name="Weitzenegger T."/>
            <person name="Bothe G."/>
            <person name="Rose M."/>
            <person name="Hauf J."/>
            <person name="Berneiser S."/>
            <person name="Hempel S."/>
            <person name="Feldpausch M."/>
            <person name="Lamberth S."/>
            <person name="Villarroel R."/>
            <person name="Gielen J."/>
            <person name="Ardiles W."/>
            <person name="Bents O."/>
            <person name="Lemcke K."/>
            <person name="Kolesov G."/>
            <person name="Mayer K.F.X."/>
            <person name="Rudd S."/>
            <person name="Schoof H."/>
            <person name="Schueller C."/>
            <person name="Zaccaria P."/>
            <person name="Mewes H.-W."/>
            <person name="Bevan M."/>
            <person name="Fransz P.F."/>
        </authorList>
    </citation>
    <scope>NUCLEOTIDE SEQUENCE [LARGE SCALE GENOMIC DNA]</scope>
    <source>
        <strain>cv. Columbia</strain>
    </source>
</reference>
<reference key="2">
    <citation type="journal article" date="2017" name="Plant J.">
        <title>Araport11: a complete reannotation of the Arabidopsis thaliana reference genome.</title>
        <authorList>
            <person name="Cheng C.Y."/>
            <person name="Krishnakumar V."/>
            <person name="Chan A.P."/>
            <person name="Thibaud-Nissen F."/>
            <person name="Schobel S."/>
            <person name="Town C.D."/>
        </authorList>
    </citation>
    <scope>GENOME REANNOTATION</scope>
    <source>
        <strain>cv. Columbia</strain>
    </source>
</reference>
<reference key="3">
    <citation type="journal article" date="2003" name="Science">
        <title>Empirical analysis of transcriptional activity in the Arabidopsis genome.</title>
        <authorList>
            <person name="Yamada K."/>
            <person name="Lim J."/>
            <person name="Dale J.M."/>
            <person name="Chen H."/>
            <person name="Shinn P."/>
            <person name="Palm C.J."/>
            <person name="Southwick A.M."/>
            <person name="Wu H.C."/>
            <person name="Kim C.J."/>
            <person name="Nguyen M."/>
            <person name="Pham P.K."/>
            <person name="Cheuk R.F."/>
            <person name="Karlin-Newmann G."/>
            <person name="Liu S.X."/>
            <person name="Lam B."/>
            <person name="Sakano H."/>
            <person name="Wu T."/>
            <person name="Yu G."/>
            <person name="Miranda M."/>
            <person name="Quach H.L."/>
            <person name="Tripp M."/>
            <person name="Chang C.H."/>
            <person name="Lee J.M."/>
            <person name="Toriumi M.J."/>
            <person name="Chan M.M."/>
            <person name="Tang C.C."/>
            <person name="Onodera C.S."/>
            <person name="Deng J.M."/>
            <person name="Akiyama K."/>
            <person name="Ansari Y."/>
            <person name="Arakawa T."/>
            <person name="Banh J."/>
            <person name="Banno F."/>
            <person name="Bowser L."/>
            <person name="Brooks S.Y."/>
            <person name="Carninci P."/>
            <person name="Chao Q."/>
            <person name="Choy N."/>
            <person name="Enju A."/>
            <person name="Goldsmith A.D."/>
            <person name="Gurjal M."/>
            <person name="Hansen N.F."/>
            <person name="Hayashizaki Y."/>
            <person name="Johnson-Hopson C."/>
            <person name="Hsuan V.W."/>
            <person name="Iida K."/>
            <person name="Karnes M."/>
            <person name="Khan S."/>
            <person name="Koesema E."/>
            <person name="Ishida J."/>
            <person name="Jiang P.X."/>
            <person name="Jones T."/>
            <person name="Kawai J."/>
            <person name="Kamiya A."/>
            <person name="Meyers C."/>
            <person name="Nakajima M."/>
            <person name="Narusaka M."/>
            <person name="Seki M."/>
            <person name="Sakurai T."/>
            <person name="Satou M."/>
            <person name="Tamse R."/>
            <person name="Vaysberg M."/>
            <person name="Wallender E.K."/>
            <person name="Wong C."/>
            <person name="Yamamura Y."/>
            <person name="Yuan S."/>
            <person name="Shinozaki K."/>
            <person name="Davis R.W."/>
            <person name="Theologis A."/>
            <person name="Ecker J.R."/>
        </authorList>
    </citation>
    <scope>NUCLEOTIDE SEQUENCE [LARGE SCALE MRNA] OF 38-599</scope>
    <source>
        <strain>cv. Columbia</strain>
    </source>
</reference>
<reference key="4">
    <citation type="submission" date="2002-03" db="EMBL/GenBank/DDBJ databases">
        <title>Full-length cDNA from Arabidopsis thaliana.</title>
        <authorList>
            <person name="Brover V.V."/>
            <person name="Troukhan M.E."/>
            <person name="Alexandrov N.A."/>
            <person name="Lu Y.-P."/>
            <person name="Flavell R.B."/>
            <person name="Feldmann K.A."/>
        </authorList>
    </citation>
    <scope>NUCLEOTIDE SEQUENCE [LARGE SCALE MRNA] OF 39-599</scope>
</reference>
<reference key="5">
    <citation type="journal article" date="2012" name="FEBS Lett.">
        <title>Genetic and molecular characterization reveals a unique nucleobase cation symporter 1 in Arabidopsis.</title>
        <authorList>
            <person name="Mourad G.S."/>
            <person name="Tippmann-Crosby J."/>
            <person name="Hunt K.A."/>
            <person name="Gicheru Y."/>
            <person name="Bade K."/>
            <person name="Mansfield T.A."/>
            <person name="Schultes N.P."/>
        </authorList>
    </citation>
    <scope>FUNCTION</scope>
    <scope>BIOPHYSICOCHEMICAL PROPERTIES</scope>
    <scope>DISRUPTION PHENOTYPE</scope>
</reference>
<reference key="6">
    <citation type="journal article" date="2012" name="Plant Cell">
        <title>De novo pyrimidine nucleotide synthesis mainly occurs outside of plastids, but a previously undiscovered nucleobase importer provides substrates for the essential salvage pathway in Arabidopsis.</title>
        <authorList>
            <person name="Witz S."/>
            <person name="Jung B."/>
            <person name="Furst S."/>
            <person name="Mohlmann T."/>
        </authorList>
    </citation>
    <scope>FUNCTION</scope>
    <scope>BIOPHYSICOCHEMICAL PROPERTIES</scope>
    <scope>SUBCELLULAR LOCATION</scope>
    <scope>TISSUE SPECIFICITY</scope>
</reference>
<reference key="7">
    <citation type="journal article" date="2014" name="PLoS ONE">
        <title>Structure-function relationship of a plant NCS1 member--homology modeling and mutagenesis identified residues critical for substrate specificity of PLUTO, a nucleobase transporter from Arabidopsis.</title>
        <authorList>
            <person name="Witz S."/>
            <person name="Panwar P."/>
            <person name="Schober M."/>
            <person name="Deppe J."/>
            <person name="Pasha F.A."/>
            <person name="Lemieux M.J."/>
            <person name="Moehlmann T."/>
        </authorList>
    </citation>
    <scope>FUNCTION</scope>
    <scope>MUTAGENESIS OF LEU-144; VAL-145; GLY-147; TRP-223; ILE-226; GLU-227; PHE-341; TRP-342; THR-425; ASN-426 AND ASN-430</scope>
</reference>
<organism>
    <name type="scientific">Arabidopsis thaliana</name>
    <name type="common">Mouse-ear cress</name>
    <dbReference type="NCBI Taxonomy" id="3702"/>
    <lineage>
        <taxon>Eukaryota</taxon>
        <taxon>Viridiplantae</taxon>
        <taxon>Streptophyta</taxon>
        <taxon>Embryophyta</taxon>
        <taxon>Tracheophyta</taxon>
        <taxon>Spermatophyta</taxon>
        <taxon>Magnoliopsida</taxon>
        <taxon>eudicotyledons</taxon>
        <taxon>Gunneridae</taxon>
        <taxon>Pentapetalae</taxon>
        <taxon>rosids</taxon>
        <taxon>malvids</taxon>
        <taxon>Brassicales</taxon>
        <taxon>Brassicaceae</taxon>
        <taxon>Camelineae</taxon>
        <taxon>Arabidopsis</taxon>
    </lineage>
</organism>